<reference key="1">
    <citation type="journal article" date="1997" name="DNA Res.">
        <title>Prediction of the coding sequences of unidentified human genes. VII. The complete sequences of 100 new cDNA clones from brain which can code for large proteins in vitro.</title>
        <authorList>
            <person name="Nagase T."/>
            <person name="Ishikawa K."/>
            <person name="Nakajima D."/>
            <person name="Ohira M."/>
            <person name="Seki N."/>
            <person name="Miyajima N."/>
            <person name="Tanaka A."/>
            <person name="Kotani H."/>
            <person name="Nomura N."/>
            <person name="Ohara O."/>
        </authorList>
    </citation>
    <scope>NUCLEOTIDE SEQUENCE [LARGE SCALE MRNA]</scope>
    <source>
        <tissue>Brain</tissue>
    </source>
</reference>
<reference key="2">
    <citation type="submission" date="2004-01" db="EMBL/GenBank/DDBJ databases">
        <authorList>
            <person name="Ohara O."/>
            <person name="Nagase T."/>
            <person name="Kikuno R."/>
            <person name="Nomura N."/>
        </authorList>
    </citation>
    <scope>SEQUENCE REVISION</scope>
</reference>
<reference key="3">
    <citation type="journal article" date="2004" name="Genome Res.">
        <title>The status, quality, and expansion of the NIH full-length cDNA project: the Mammalian Gene Collection (MGC).</title>
        <authorList>
            <consortium name="The MGC Project Team"/>
        </authorList>
    </citation>
    <scope>NUCLEOTIDE SEQUENCE [LARGE SCALE MRNA]</scope>
    <source>
        <tissue>Lung carcinoma</tissue>
        <tissue>Melanoma</tissue>
    </source>
</reference>
<reference key="4">
    <citation type="journal article" date="2005" name="Genes Dev.">
        <title>The human PAF complex coordinates transcription with events downstream of RNA synthesis.</title>
        <authorList>
            <person name="Zhu B."/>
            <person name="Mandal S.S."/>
            <person name="Pham A.D."/>
            <person name="Zheng Y."/>
            <person name="Erdjument-Bromage H."/>
            <person name="Batra S.K."/>
            <person name="Tempst P."/>
            <person name="Reinberg D."/>
        </authorList>
    </citation>
    <scope>FUNCTION</scope>
    <scope>SUBCELLULAR LOCATION</scope>
    <scope>INTERACTION WITH PAF1</scope>
    <scope>IDENTIFICATION IN THE SKI COMPLEX</scope>
</reference>
<reference key="5">
    <citation type="journal article" date="2011" name="BMC Syst. Biol.">
        <title>Initial characterization of the human central proteome.</title>
        <authorList>
            <person name="Burkard T.R."/>
            <person name="Planyavsky M."/>
            <person name="Kaupe I."/>
            <person name="Breitwieser F.P."/>
            <person name="Buerckstuemmer T."/>
            <person name="Bennett K.L."/>
            <person name="Superti-Furga G."/>
            <person name="Colinge J."/>
        </authorList>
    </citation>
    <scope>IDENTIFICATION BY MASS SPECTROMETRY [LARGE SCALE ANALYSIS]</scope>
</reference>
<reference key="6">
    <citation type="journal article" date="2011" name="Hum. Mutat.">
        <title>Novel mutations in TTC37 associated with Tricho-Hepato-Enteric syndrome.</title>
        <authorList>
            <person name="Fabre A."/>
            <person name="Martinez-Vinson C."/>
            <person name="Roquelaure B."/>
            <person name="Missirian C."/>
            <person name="Andre N."/>
            <person name="Breton A."/>
            <person name="Lachaux A."/>
            <person name="Odul E."/>
            <person name="Colomb V."/>
            <person name="Lemale J."/>
            <person name="Cezard J.P."/>
            <person name="Goulet O."/>
            <person name="Sarles J."/>
            <person name="Levy N."/>
            <person name="Badens C."/>
        </authorList>
    </citation>
    <scope>TISSUE SPECIFICITY</scope>
    <scope>VARIANTS 860-ASN--GLU-878 DEL; ASP-1077; ALA-1270 AND ARG-1485</scope>
    <scope>ASSOCIATION WITH THES1</scope>
</reference>
<reference key="7">
    <citation type="journal article" date="2012" name="Proc. Natl. Acad. Sci. U.S.A.">
        <title>N-terminal acetylome analyses and functional insights of the N-terminal acetyltransferase NatB.</title>
        <authorList>
            <person name="Van Damme P."/>
            <person name="Lasa M."/>
            <person name="Polevoda B."/>
            <person name="Gazquez C."/>
            <person name="Elosegui-Artola A."/>
            <person name="Kim D.S."/>
            <person name="De Juan-Pardo E."/>
            <person name="Demeyer K."/>
            <person name="Hole K."/>
            <person name="Larrea E."/>
            <person name="Timmerman E."/>
            <person name="Prieto J."/>
            <person name="Arnesen T."/>
            <person name="Sherman F."/>
            <person name="Gevaert K."/>
            <person name="Aldabe R."/>
        </authorList>
    </citation>
    <scope>ACETYLATION [LARGE SCALE ANALYSIS] AT SER-2</scope>
    <scope>CLEAVAGE OF INITIATOR METHIONINE [LARGE SCALE ANALYSIS]</scope>
    <scope>IDENTIFICATION BY MASS SPECTROMETRY [LARGE SCALE ANALYSIS]</scope>
</reference>
<reference key="8">
    <citation type="journal article" date="2014" name="J. Proteomics">
        <title>An enzyme assisted RP-RPLC approach for in-depth analysis of human liver phosphoproteome.</title>
        <authorList>
            <person name="Bian Y."/>
            <person name="Song C."/>
            <person name="Cheng K."/>
            <person name="Dong M."/>
            <person name="Wang F."/>
            <person name="Huang J."/>
            <person name="Sun D."/>
            <person name="Wang L."/>
            <person name="Ye M."/>
            <person name="Zou H."/>
        </authorList>
    </citation>
    <scope>IDENTIFICATION BY MASS SPECTROMETRY [LARGE SCALE ANALYSIS]</scope>
    <source>
        <tissue>Liver</tissue>
    </source>
</reference>
<reference key="9">
    <citation type="journal article" date="2010" name="Gastroenterology">
        <title>Mutations in TTC37 cause trichohepatoenteric syndrome (phenotypic diarrhea of infancy).</title>
        <authorList>
            <person name="Hartley J.L."/>
            <person name="Zachos N.C."/>
            <person name="Dawood B."/>
            <person name="Donowitz M."/>
            <person name="Forman J."/>
            <person name="Pollitt R.J."/>
            <person name="Morgan N.V."/>
            <person name="Tee L."/>
            <person name="Gissen P."/>
            <person name="Kahr W.H."/>
            <person name="Knisely A.S."/>
            <person name="Watson S."/>
            <person name="Chitayat D."/>
            <person name="Booth I.W."/>
            <person name="Protheroe S."/>
            <person name="Murphy S."/>
            <person name="de Vries E."/>
            <person name="Kelly D.A."/>
            <person name="Maher E.R."/>
        </authorList>
    </citation>
    <scope>VARIANTS THES1 ARG-251; ASN-1283 AND SER-1505</scope>
</reference>
<reference key="10">
    <citation type="journal article" date="2020" name="Mol. Cell">
        <title>Extraction of mRNA from stalled ribosomes by the Ski complex.</title>
        <authorList>
            <person name="Zinoviev A."/>
            <person name="Ayupov R.K."/>
            <person name="Abaeva I.S."/>
            <person name="Hellen C.U.T."/>
            <person name="Pestova T.V."/>
        </authorList>
    </citation>
    <scope>FUNCTION</scope>
    <scope>IDENTIFICATION IN THE SKI COMPLEX</scope>
</reference>
<reference evidence="12 13 14 15" key="11">
    <citation type="journal article" date="2022" name="Mol. Cell">
        <title>The human SKI complex regulates channeling of ribosome-bound RNA to the exosome via an intrinsic gatekeeping mechanism.</title>
        <authorList>
            <person name="Koegel A."/>
            <person name="Keidel A."/>
            <person name="Bonneau F."/>
            <person name="Schaefer I.B."/>
            <person name="Conti E."/>
        </authorList>
    </citation>
    <scope>STRUCTURE BY ELECTRON MICROSCOPY (3.10 ANGSTROMS) IN COMPLEX WITH SKIC2 AND SKIC8</scope>
    <scope>FUNCTION</scope>
    <scope>IDENTIFICATION IN THE SKI COMPLEX</scope>
</reference>
<keyword id="KW-0002">3D-structure</keyword>
<keyword id="KW-0007">Acetylation</keyword>
<keyword id="KW-0963">Cytoplasm</keyword>
<keyword id="KW-0539">Nucleus</keyword>
<keyword id="KW-1267">Proteomics identification</keyword>
<keyword id="KW-1185">Reference proteome</keyword>
<keyword id="KW-0677">Repeat</keyword>
<keyword id="KW-0802">TPR repeat</keyword>
<name>SKI3_HUMAN</name>
<sequence>MSSKEVKTALKSARDAIRNKEYKEALKHCKTVLKQEKNNYNAWVFIGVAAAELEQPDQAQSAYKKAAELEPDQLLAWQGLANLYEKYNHINAKDDLPGVYQKLLDLYESVDKQKWCDVCKKLVDLYYQEKKHLEVARTWHKLIKTRQEQGAENEELHQLWRKLTQFLAESTEDQNNETQQLLFTAFENALGLSDKIPSEDHQVLYRHFIQSLSKFPHESARLKKACEGMINIYPTVQYPLEVLCLHLIESGNLTDEGQQYCCRLVEMDSKSGPGLIGLGIKALQDKKYEDAVRNLTEGLKESPVCTSGWYHLAEAQVKMHRPKEAVLSCSQALKIVDNLGASGNSLYQRNLCLHLKAEALIKLSDYDSSEEAIRTLDQISDADNIPGLLVLKSLAYRNKGSFDEAAKIMEDLLSSYPDLAEVHALEALIHFTKKDYLQAEKCFQRALEKDTEVAEYHYQLGLTYWFMGEETRKDKTKALTHFLKAARLDTYMGKVFCYLGHYYRDVVGDKNRARGCYRKAFELDDTDAESGAAAVDLSVELEDMEMALAILTTVTQKASAGTAKWAWLRRGLYYLKAGQHSQAVADLQAALRADPKDFNCWESLGEAYLSRGGYTTALKSFTKASELNPESIYSVFKVAAIQQILGKYKEAVAQYQMIIKKKEDYVPALKGLGECHLMMAKAALVDYLDGKAVDYIEKALEYFTCALQHRADVSCLWKLAGDACTCLYAVAPSKVNVHVLGVLLGQKEGKQVLKKNELLHLGGRCYGRALKLMSTSNTWCDLGINYYRQAQHLAETGSNMNDLKELLEKSLHCLKKAVRLDSNNHLYWNALGVVACYSGIGNYALAQHCFIKSIQSEQINAVAWTNLGVLYLTNENIEQAHEAFKMAQSLDPSYLMCWIGQALIAEAVGSYDTMDLFRHTTELNMHTEGALGYAYWVCTTLQDKSNRETELYQYNILQMNAIPAAQVILNKYVERIQNYAPAFTMLGYLNEHLQLKKEAANAYQRAILLLQTAEDQDTYNVAIRNYGRLLCSTGEYDKAIQAFKSTPLEVLEDIIGFALALFMKGLYKESSKAYERALSIVESEQDKAHILTALAITEYKQGKTDVAKTLLFKCSILKEPTTESLQALCALGLAMQDATLSKAALNELLKHIKHKDSNYQRCLLTSAIYALQGRSVAVQKQISKAVHSNPGDPALWSLLSRVVAQYAQRNAKGGVVAGNVAHILDSNHGKKALLYTAVNQLAMGSSSAEDEKNTALKTIQKAALLSPGDPAIWAGLMAACHADDKLALVNNTQPKRIDLYLALLSAVSASIKDEKFFENYNQSLEKWSLSQAVTGLIDTGRISEAETLCTKNLKSNPDQPAVILLLRQVQCKPLLESQKPLPDAVLEELQKTVMSNSTSVPAWQWLAHVYQSQGMMRAAEMCYRKSLQLASQRGSWSGKLSSLLRLALLALKVCMANISNDHWPSLVQEATTEALKLCFCPLAVLLQALLQFKRKMGARETRRLLERVVYQPGYPKSIASTARWYLLRHLYAKDDYELIDVLVNNAKTHGDTRALELNQRLSSQ</sequence>
<proteinExistence type="evidence at protein level"/>
<gene>
    <name evidence="11" type="primary">SKIC3</name>
    <name evidence="9" type="synonym">KIAA0372</name>
    <name evidence="7" type="synonym">TTC37</name>
</gene>
<protein>
    <recommendedName>
        <fullName evidence="10">Superkiller complex protein 3</fullName>
        <shortName evidence="8">Ski3</shortName>
    </recommendedName>
    <alternativeName>
        <fullName>Tetratricopeptide repeat protein 37</fullName>
        <shortName>TPR repeat protein 37</shortName>
    </alternativeName>
    <alternativeName>
        <fullName evidence="6">Tricho-hepatic-enteric syndrome protein</fullName>
        <shortName evidence="6">Thespin</shortName>
    </alternativeName>
</protein>
<organism>
    <name type="scientific">Homo sapiens</name>
    <name type="common">Human</name>
    <dbReference type="NCBI Taxonomy" id="9606"/>
    <lineage>
        <taxon>Eukaryota</taxon>
        <taxon>Metazoa</taxon>
        <taxon>Chordata</taxon>
        <taxon>Craniata</taxon>
        <taxon>Vertebrata</taxon>
        <taxon>Euteleostomi</taxon>
        <taxon>Mammalia</taxon>
        <taxon>Eutheria</taxon>
        <taxon>Euarchontoglires</taxon>
        <taxon>Primates</taxon>
        <taxon>Haplorrhini</taxon>
        <taxon>Catarrhini</taxon>
        <taxon>Hominidae</taxon>
        <taxon>Homo</taxon>
    </lineage>
</organism>
<feature type="initiator methionine" description="Removed" evidence="16">
    <location>
        <position position="1"/>
    </location>
</feature>
<feature type="chain" id="PRO_0000251722" description="Superkiller complex protein 3">
    <location>
        <begin position="2"/>
        <end position="1564"/>
    </location>
</feature>
<feature type="repeat" description="TPR 1">
    <location>
        <begin position="6"/>
        <end position="39"/>
    </location>
</feature>
<feature type="repeat" description="TPR 2">
    <location>
        <begin position="40"/>
        <end position="73"/>
    </location>
</feature>
<feature type="repeat" description="TPR 3">
    <location>
        <begin position="272"/>
        <end position="305"/>
    </location>
</feature>
<feature type="repeat" description="TPR 4">
    <location>
        <begin position="307"/>
        <end position="339"/>
    </location>
</feature>
<feature type="repeat" description="TPR 5">
    <location>
        <begin position="386"/>
        <end position="419"/>
    </location>
</feature>
<feature type="repeat" description="TPR 6">
    <location>
        <begin position="420"/>
        <end position="453"/>
    </location>
</feature>
<feature type="repeat" description="TPR 7">
    <location>
        <begin position="455"/>
        <end position="492"/>
    </location>
</feature>
<feature type="repeat" description="TPR 8">
    <location>
        <begin position="493"/>
        <end position="527"/>
    </location>
</feature>
<feature type="repeat" description="TPR 9">
    <location>
        <begin position="564"/>
        <end position="597"/>
    </location>
</feature>
<feature type="repeat" description="TPR 10">
    <location>
        <begin position="598"/>
        <end position="631"/>
    </location>
</feature>
<feature type="repeat" description="TPR 11">
    <location>
        <begin position="633"/>
        <end position="665"/>
    </location>
</feature>
<feature type="repeat" description="TPR 12">
    <location>
        <begin position="679"/>
        <end position="713"/>
    </location>
</feature>
<feature type="repeat" description="TPR 13">
    <location>
        <begin position="790"/>
        <end position="824"/>
    </location>
</feature>
<feature type="repeat" description="TPR 14">
    <location>
        <begin position="826"/>
        <end position="860"/>
    </location>
</feature>
<feature type="repeat" description="TPR 15">
    <location>
        <begin position="861"/>
        <end position="894"/>
    </location>
</feature>
<feature type="repeat" description="TPR 16">
    <location>
        <begin position="980"/>
        <end position="1013"/>
    </location>
</feature>
<feature type="repeat" description="TPR 17">
    <location>
        <begin position="1020"/>
        <end position="1054"/>
    </location>
</feature>
<feature type="repeat" description="TPR 18">
    <location>
        <begin position="1056"/>
        <end position="1084"/>
    </location>
</feature>
<feature type="repeat" description="TPR 19">
    <location>
        <begin position="1326"/>
        <end position="1359"/>
    </location>
</feature>
<feature type="repeat" description="TPR 20">
    <location>
        <begin position="1400"/>
        <end position="1433"/>
    </location>
</feature>
<feature type="modified residue" description="N-acetylserine" evidence="16">
    <location>
        <position position="2"/>
    </location>
</feature>
<feature type="sequence variant" id="VAR_067957" description="In THES1; dbSNP:rs763816083." evidence="2">
    <original>G</original>
    <variation>R</variation>
    <location>
        <position position="251"/>
    </location>
</feature>
<feature type="sequence variant" id="VAR_027705" description="In dbSNP:rs17084873.">
    <original>L</original>
    <variation>V</variation>
    <location>
        <position position="437"/>
    </location>
</feature>
<feature type="sequence variant" id="VAR_065297" description="Found in a THES1 patient." evidence="3">
    <location>
        <begin position="860"/>
        <end position="878"/>
    </location>
</feature>
<feature type="sequence variant" id="VAR_065298" description="Found in a THES1 patient." evidence="3">
    <original>A</original>
    <variation>D</variation>
    <location>
        <position position="1077"/>
    </location>
</feature>
<feature type="sequence variant" id="VAR_065299" description="Found in a THES1 patient; dbSNP:rs146627706." evidence="3">
    <original>P</original>
    <variation>A</variation>
    <location>
        <position position="1270"/>
    </location>
</feature>
<feature type="sequence variant" id="VAR_067958" description="In THES1." evidence="2">
    <original>D</original>
    <variation>N</variation>
    <location>
        <position position="1283"/>
    </location>
</feature>
<feature type="sequence variant" id="VAR_027706" description="In dbSNP:rs2303650.">
    <original>R</original>
    <variation>S</variation>
    <location>
        <position position="1296"/>
    </location>
</feature>
<feature type="sequence variant" id="VAR_065300" description="Found in a THES1 patient." evidence="3">
    <original>L</original>
    <variation>R</variation>
    <location>
        <position position="1485"/>
    </location>
</feature>
<feature type="sequence variant" id="VAR_067959" description="In THES1; dbSNP:rs376720108." evidence="2">
    <original>L</original>
    <variation>S</variation>
    <location>
        <position position="1505"/>
    </location>
</feature>
<feature type="helix" evidence="17">
    <location>
        <begin position="355"/>
        <end position="365"/>
    </location>
</feature>
<feature type="helix" evidence="17">
    <location>
        <begin position="370"/>
        <end position="382"/>
    </location>
</feature>
<feature type="helix" evidence="17">
    <location>
        <begin position="389"/>
        <end position="399"/>
    </location>
</feature>
<feature type="strand" evidence="17">
    <location>
        <begin position="403"/>
        <end position="405"/>
    </location>
</feature>
<feature type="helix" evidence="17">
    <location>
        <begin position="406"/>
        <end position="415"/>
    </location>
</feature>
<feature type="helix" evidence="17">
    <location>
        <begin position="422"/>
        <end position="435"/>
    </location>
</feature>
<feature type="helix" evidence="17">
    <location>
        <begin position="439"/>
        <end position="451"/>
    </location>
</feature>
<feature type="helix" evidence="17">
    <location>
        <begin position="457"/>
        <end position="469"/>
    </location>
</feature>
<feature type="turn" evidence="17">
    <location>
        <begin position="470"/>
        <end position="472"/>
    </location>
</feature>
<feature type="turn" evidence="17">
    <location>
        <begin position="476"/>
        <end position="479"/>
    </location>
</feature>
<feature type="helix" evidence="17">
    <location>
        <begin position="480"/>
        <end position="488"/>
    </location>
</feature>
<feature type="strand" evidence="17">
    <location>
        <begin position="492"/>
        <end position="496"/>
    </location>
</feature>
<feature type="helix" evidence="17">
    <location>
        <begin position="497"/>
        <end position="503"/>
    </location>
</feature>
<feature type="helix" evidence="17">
    <location>
        <begin position="510"/>
        <end position="523"/>
    </location>
</feature>
<feature type="helix" evidence="17">
    <location>
        <begin position="530"/>
        <end position="540"/>
    </location>
</feature>
<feature type="helix" evidence="17">
    <location>
        <begin position="547"/>
        <end position="556"/>
    </location>
</feature>
<feature type="strand" evidence="18">
    <location>
        <begin position="559"/>
        <end position="561"/>
    </location>
</feature>
<feature type="helix" evidence="17">
    <location>
        <begin position="564"/>
        <end position="576"/>
    </location>
</feature>
<feature type="helix" evidence="17">
    <location>
        <begin position="580"/>
        <end position="593"/>
    </location>
</feature>
<feature type="helix" evidence="17">
    <location>
        <begin position="598"/>
        <end position="610"/>
    </location>
</feature>
<feature type="helix" evidence="17">
    <location>
        <begin position="615"/>
        <end position="626"/>
    </location>
</feature>
<feature type="helix" evidence="17">
    <location>
        <begin position="632"/>
        <end position="644"/>
    </location>
</feature>
<feature type="helix" evidence="17">
    <location>
        <begin position="648"/>
        <end position="661"/>
    </location>
</feature>
<feature type="helix" evidence="17">
    <location>
        <begin position="666"/>
        <end position="685"/>
    </location>
</feature>
<feature type="helix" evidence="17">
    <location>
        <begin position="689"/>
        <end position="709"/>
    </location>
</feature>
<feature type="helix" evidence="17">
    <location>
        <begin position="714"/>
        <end position="725"/>
    </location>
</feature>
<feature type="strand" evidence="17">
    <location>
        <begin position="732"/>
        <end position="734"/>
    </location>
</feature>
<feature type="strand" evidence="17">
    <location>
        <begin position="737"/>
        <end position="739"/>
    </location>
</feature>
<feature type="helix" evidence="17">
    <location>
        <begin position="742"/>
        <end position="744"/>
    </location>
</feature>
<feature type="strand" evidence="17">
    <location>
        <begin position="751"/>
        <end position="753"/>
    </location>
</feature>
<feature type="helix" evidence="17">
    <location>
        <begin position="755"/>
        <end position="772"/>
    </location>
</feature>
<feature type="helix" evidence="17">
    <location>
        <begin position="776"/>
        <end position="795"/>
    </location>
</feature>
<feature type="strand" evidence="17">
    <location>
        <begin position="800"/>
        <end position="803"/>
    </location>
</feature>
<feature type="helix" evidence="17">
    <location>
        <begin position="804"/>
        <end position="820"/>
    </location>
</feature>
<feature type="helix" evidence="17">
    <location>
        <begin position="825"/>
        <end position="835"/>
    </location>
</feature>
<feature type="turn" evidence="17">
    <location>
        <begin position="838"/>
        <end position="840"/>
    </location>
</feature>
<feature type="helix" evidence="17">
    <location>
        <begin position="843"/>
        <end position="856"/>
    </location>
</feature>
<feature type="helix" evidence="17">
    <location>
        <begin position="861"/>
        <end position="873"/>
    </location>
</feature>
<feature type="helix" evidence="17">
    <location>
        <begin position="877"/>
        <end position="890"/>
    </location>
</feature>
<feature type="helix" evidence="17">
    <location>
        <begin position="895"/>
        <end position="907"/>
    </location>
</feature>
<feature type="helix" evidence="17">
    <location>
        <begin position="913"/>
        <end position="923"/>
    </location>
</feature>
<feature type="helix" evidence="17">
    <location>
        <begin position="927"/>
        <end position="942"/>
    </location>
</feature>
<feature type="helix" evidence="17">
    <location>
        <begin position="952"/>
        <end position="958"/>
    </location>
</feature>
<feature type="helix" evidence="17">
    <location>
        <begin position="961"/>
        <end position="975"/>
    </location>
</feature>
<feature type="helix" evidence="17">
    <location>
        <begin position="980"/>
        <end position="992"/>
    </location>
</feature>
<feature type="helix" evidence="17">
    <location>
        <begin position="996"/>
        <end position="1009"/>
    </location>
</feature>
<feature type="helix" evidence="17">
    <location>
        <begin position="1017"/>
        <end position="1032"/>
    </location>
</feature>
<feature type="helix" evidence="17">
    <location>
        <begin position="1036"/>
        <end position="1044"/>
    </location>
</feature>
<feature type="helix" evidence="17">
    <location>
        <begin position="1051"/>
        <end position="1064"/>
    </location>
</feature>
<feature type="helix" evidence="17">
    <location>
        <begin position="1067"/>
        <end position="1079"/>
    </location>
</feature>
<feature type="helix" evidence="17">
    <location>
        <begin position="1085"/>
        <end position="1101"/>
    </location>
</feature>
<feature type="helix" evidence="17">
    <location>
        <begin position="1104"/>
        <end position="1115"/>
    </location>
</feature>
<feature type="strand" evidence="17">
    <location>
        <begin position="1117"/>
        <end position="1119"/>
    </location>
</feature>
<feature type="helix" evidence="17">
    <location>
        <begin position="1124"/>
        <end position="1134"/>
    </location>
</feature>
<feature type="helix" evidence="17">
    <location>
        <begin position="1138"/>
        <end position="1151"/>
    </location>
</feature>
<feature type="helix" evidence="17">
    <location>
        <begin position="1160"/>
        <end position="1171"/>
    </location>
</feature>
<feature type="helix" evidence="17">
    <location>
        <begin position="1177"/>
        <end position="1188"/>
    </location>
</feature>
<feature type="helix" evidence="17">
    <location>
        <begin position="1193"/>
        <end position="1205"/>
    </location>
</feature>
<feature type="helix" evidence="17">
    <location>
        <begin position="1211"/>
        <end position="1223"/>
    </location>
</feature>
<feature type="helix" evidence="17">
    <location>
        <begin position="1229"/>
        <end position="1243"/>
    </location>
</feature>
<feature type="strand" evidence="17">
    <location>
        <begin position="1251"/>
        <end position="1254"/>
    </location>
</feature>
<feature type="helix" evidence="17">
    <location>
        <begin position="1255"/>
        <end position="1265"/>
    </location>
</feature>
<feature type="helix" evidence="17">
    <location>
        <begin position="1270"/>
        <end position="1290"/>
    </location>
</feature>
<feature type="helix" evidence="17">
    <location>
        <begin position="1300"/>
        <end position="1312"/>
    </location>
</feature>
<feature type="helix" evidence="17">
    <location>
        <begin position="1318"/>
        <end position="1339"/>
    </location>
</feature>
<feature type="helix" evidence="17">
    <location>
        <begin position="1342"/>
        <end position="1355"/>
    </location>
</feature>
<feature type="helix" evidence="17">
    <location>
        <begin position="1362"/>
        <end position="1370"/>
    </location>
</feature>
<feature type="strand" evidence="17">
    <location>
        <begin position="1372"/>
        <end position="1374"/>
    </location>
</feature>
<feature type="helix" evidence="17">
    <location>
        <begin position="1383"/>
        <end position="1395"/>
    </location>
</feature>
<feature type="helix" evidence="17">
    <location>
        <begin position="1400"/>
        <end position="1413"/>
    </location>
</feature>
<feature type="helix" evidence="17">
    <location>
        <begin position="1416"/>
        <end position="1433"/>
    </location>
</feature>
<feature type="helix" evidence="17">
    <location>
        <begin position="1437"/>
        <end position="1455"/>
    </location>
</feature>
<feature type="helix" evidence="17">
    <location>
        <begin position="1463"/>
        <end position="1477"/>
    </location>
</feature>
<feature type="helix" evidence="17">
    <location>
        <begin position="1481"/>
        <end position="1493"/>
    </location>
</feature>
<feature type="helix" evidence="17">
    <location>
        <begin position="1499"/>
        <end position="1510"/>
    </location>
</feature>
<feature type="strand" evidence="18">
    <location>
        <begin position="1511"/>
        <end position="1513"/>
    </location>
</feature>
<feature type="helix" evidence="17">
    <location>
        <begin position="1516"/>
        <end position="1532"/>
    </location>
</feature>
<feature type="helix" evidence="17">
    <location>
        <begin position="1536"/>
        <end position="1547"/>
    </location>
</feature>
<feature type="helix" evidence="17">
    <location>
        <begin position="1553"/>
        <end position="1562"/>
    </location>
</feature>
<evidence type="ECO:0000269" key="1">
    <source>
    </source>
</evidence>
<evidence type="ECO:0000269" key="2">
    <source>
    </source>
</evidence>
<evidence type="ECO:0000269" key="3">
    <source>
    </source>
</evidence>
<evidence type="ECO:0000269" key="4">
    <source>
    </source>
</evidence>
<evidence type="ECO:0000269" key="5">
    <source>
    </source>
</evidence>
<evidence type="ECO:0000303" key="6">
    <source>
    </source>
</evidence>
<evidence type="ECO:0000303" key="7">
    <source>
    </source>
</evidence>
<evidence type="ECO:0000303" key="8">
    <source>
    </source>
</evidence>
<evidence type="ECO:0000303" key="9">
    <source>
    </source>
</evidence>
<evidence type="ECO:0000305" key="10"/>
<evidence type="ECO:0000312" key="11">
    <source>
        <dbReference type="HGNC" id="HGNC:23639"/>
    </source>
</evidence>
<evidence type="ECO:0007744" key="12">
    <source>
        <dbReference type="PDB" id="7QDR"/>
    </source>
</evidence>
<evidence type="ECO:0007744" key="13">
    <source>
        <dbReference type="PDB" id="7QDS"/>
    </source>
</evidence>
<evidence type="ECO:0007744" key="14">
    <source>
        <dbReference type="PDB" id="7QDY"/>
    </source>
</evidence>
<evidence type="ECO:0007744" key="15">
    <source>
        <dbReference type="PDB" id="7QDZ"/>
    </source>
</evidence>
<evidence type="ECO:0007744" key="16">
    <source>
    </source>
</evidence>
<evidence type="ECO:0007829" key="17">
    <source>
        <dbReference type="PDB" id="7QDY"/>
    </source>
</evidence>
<evidence type="ECO:0007829" key="18">
    <source>
        <dbReference type="PDB" id="9G8R"/>
    </source>
</evidence>
<dbReference type="EMBL" id="AB002370">
    <property type="protein sequence ID" value="BAA20827.2"/>
    <property type="status" value="ALT_INIT"/>
    <property type="molecule type" value="mRNA"/>
</dbReference>
<dbReference type="EMBL" id="BC015163">
    <property type="protein sequence ID" value="AAH15163.1"/>
    <property type="molecule type" value="mRNA"/>
</dbReference>
<dbReference type="EMBL" id="BC056893">
    <property type="protein sequence ID" value="AAH56893.1"/>
    <property type="molecule type" value="mRNA"/>
</dbReference>
<dbReference type="CCDS" id="CCDS4072.1"/>
<dbReference type="RefSeq" id="NP_055454.1">
    <property type="nucleotide sequence ID" value="NM_014639.4"/>
</dbReference>
<dbReference type="RefSeq" id="XP_047273893.1">
    <property type="nucleotide sequence ID" value="XM_047417937.1"/>
</dbReference>
<dbReference type="PDB" id="7QDR">
    <property type="method" value="EM"/>
    <property type="resolution" value="3.70 A"/>
    <property type="chains" value="B=1-1564"/>
</dbReference>
<dbReference type="PDB" id="7QDS">
    <property type="method" value="EM"/>
    <property type="resolution" value="3.80 A"/>
    <property type="chains" value="B=1-1564"/>
</dbReference>
<dbReference type="PDB" id="7QDY">
    <property type="method" value="EM"/>
    <property type="resolution" value="3.10 A"/>
    <property type="chains" value="B=1-1564"/>
</dbReference>
<dbReference type="PDB" id="7QDZ">
    <property type="method" value="EM"/>
    <property type="resolution" value="3.60 A"/>
    <property type="chains" value="B=1-1564"/>
</dbReference>
<dbReference type="PDB" id="9G8O">
    <property type="method" value="EM"/>
    <property type="resolution" value="3.40 A"/>
    <property type="chains" value="B=1-1564"/>
</dbReference>
<dbReference type="PDB" id="9G8Q">
    <property type="method" value="EM"/>
    <property type="resolution" value="4.10 A"/>
    <property type="chains" value="B=1-1564"/>
</dbReference>
<dbReference type="PDB" id="9G8R">
    <property type="method" value="EM"/>
    <property type="resolution" value="3.40 A"/>
    <property type="chains" value="B=1-1564"/>
</dbReference>
<dbReference type="PDBsum" id="7QDR"/>
<dbReference type="PDBsum" id="7QDS"/>
<dbReference type="PDBsum" id="7QDY"/>
<dbReference type="PDBsum" id="7QDZ"/>
<dbReference type="PDBsum" id="9G8O"/>
<dbReference type="PDBsum" id="9G8Q"/>
<dbReference type="PDBsum" id="9G8R"/>
<dbReference type="EMDB" id="EMD-13923"/>
<dbReference type="EMDB" id="EMD-13925"/>
<dbReference type="EMDB" id="EMD-13927"/>
<dbReference type="EMDB" id="EMD-13928"/>
<dbReference type="EMDB" id="EMD-51134"/>
<dbReference type="EMDB" id="EMD-51136"/>
<dbReference type="EMDB" id="EMD-51137"/>
<dbReference type="SMR" id="Q6PGP7"/>
<dbReference type="BioGRID" id="115010">
    <property type="interactions" value="127"/>
</dbReference>
<dbReference type="ComplexPortal" id="CPX-2736">
    <property type="entry name" value="SKI complex"/>
</dbReference>
<dbReference type="CORUM" id="Q6PGP7"/>
<dbReference type="FunCoup" id="Q6PGP7">
    <property type="interactions" value="3538"/>
</dbReference>
<dbReference type="IntAct" id="Q6PGP7">
    <property type="interactions" value="56"/>
</dbReference>
<dbReference type="MINT" id="Q6PGP7"/>
<dbReference type="STRING" id="9606.ENSP00000497948"/>
<dbReference type="GlyGen" id="Q6PGP7">
    <property type="glycosylation" value="2 sites, 1 O-linked glycan (1 site)"/>
</dbReference>
<dbReference type="iPTMnet" id="Q6PGP7"/>
<dbReference type="PhosphoSitePlus" id="Q6PGP7"/>
<dbReference type="SwissPalm" id="Q6PGP7"/>
<dbReference type="BioMuta" id="TTC37"/>
<dbReference type="DMDM" id="74758339"/>
<dbReference type="jPOST" id="Q6PGP7"/>
<dbReference type="MassIVE" id="Q6PGP7"/>
<dbReference type="PaxDb" id="9606-ENSP00000351596"/>
<dbReference type="PeptideAtlas" id="Q6PGP7"/>
<dbReference type="ProteomicsDB" id="67118"/>
<dbReference type="Pumba" id="Q6PGP7"/>
<dbReference type="Antibodypedia" id="48952">
    <property type="antibodies" value="28 antibodies from 15 providers"/>
</dbReference>
<dbReference type="DNASU" id="9652"/>
<dbReference type="Ensembl" id="ENST00000358746.7">
    <property type="protein sequence ID" value="ENSP00000351596.3"/>
    <property type="gene ID" value="ENSG00000198677.13"/>
</dbReference>
<dbReference type="Ensembl" id="ENST00000649566.1">
    <property type="protein sequence ID" value="ENSP00000497948.1"/>
    <property type="gene ID" value="ENSG00000198677.13"/>
</dbReference>
<dbReference type="GeneID" id="9652"/>
<dbReference type="KEGG" id="hsa:9652"/>
<dbReference type="MANE-Select" id="ENST00000358746.7">
    <property type="protein sequence ID" value="ENSP00000351596.3"/>
    <property type="RefSeq nucleotide sequence ID" value="NM_014639.4"/>
    <property type="RefSeq protein sequence ID" value="NP_055454.1"/>
</dbReference>
<dbReference type="UCSC" id="uc003klb.4">
    <property type="organism name" value="human"/>
</dbReference>
<dbReference type="AGR" id="HGNC:23639"/>
<dbReference type="CTD" id="9652"/>
<dbReference type="DisGeNET" id="9652"/>
<dbReference type="GeneCards" id="SKIC3"/>
<dbReference type="GeneReviews" id="SKIC3"/>
<dbReference type="HGNC" id="HGNC:23639">
    <property type="gene designation" value="SKIC3"/>
</dbReference>
<dbReference type="HPA" id="ENSG00000198677">
    <property type="expression patterns" value="Low tissue specificity"/>
</dbReference>
<dbReference type="MalaCards" id="SKIC3"/>
<dbReference type="MIM" id="222470">
    <property type="type" value="phenotype"/>
</dbReference>
<dbReference type="MIM" id="614589">
    <property type="type" value="gene"/>
</dbReference>
<dbReference type="neXtProt" id="NX_Q6PGP7"/>
<dbReference type="OpenTargets" id="ENSG00000198677"/>
<dbReference type="Orphanet" id="84064">
    <property type="disease" value="Syndromic diarrhea"/>
</dbReference>
<dbReference type="PharmGKB" id="PA162407226"/>
<dbReference type="VEuPathDB" id="HostDB:ENSG00000198677"/>
<dbReference type="eggNOG" id="KOG1127">
    <property type="taxonomic scope" value="Eukaryota"/>
</dbReference>
<dbReference type="GeneTree" id="ENSGT00390000016407"/>
<dbReference type="HOGENOM" id="CLU_003788_1_0_1"/>
<dbReference type="InParanoid" id="Q6PGP7"/>
<dbReference type="OMA" id="CQWELDP"/>
<dbReference type="OrthoDB" id="421075at2759"/>
<dbReference type="PAN-GO" id="Q6PGP7">
    <property type="GO annotations" value="2 GO annotations based on evolutionary models"/>
</dbReference>
<dbReference type="PhylomeDB" id="Q6PGP7"/>
<dbReference type="TreeFam" id="TF323569"/>
<dbReference type="PathwayCommons" id="Q6PGP7"/>
<dbReference type="Reactome" id="R-HSA-429958">
    <property type="pathway name" value="mRNA decay by 3' to 5' exoribonuclease"/>
</dbReference>
<dbReference type="SignaLink" id="Q6PGP7"/>
<dbReference type="BioGRID-ORCS" id="9652">
    <property type="hits" value="40 hits in 1159 CRISPR screens"/>
</dbReference>
<dbReference type="CD-CODE" id="FB4E32DD">
    <property type="entry name" value="Presynaptic clusters and postsynaptic densities"/>
</dbReference>
<dbReference type="ChiTaRS" id="TTC37">
    <property type="organism name" value="human"/>
</dbReference>
<dbReference type="GenomeRNAi" id="9652"/>
<dbReference type="Pharos" id="Q6PGP7">
    <property type="development level" value="Tbio"/>
</dbReference>
<dbReference type="PRO" id="PR:Q6PGP7"/>
<dbReference type="Proteomes" id="UP000005640">
    <property type="component" value="Chromosome 5"/>
</dbReference>
<dbReference type="RNAct" id="Q6PGP7">
    <property type="molecule type" value="protein"/>
</dbReference>
<dbReference type="Bgee" id="ENSG00000198677">
    <property type="expression patterns" value="Expressed in calcaneal tendon and 208 other cell types or tissues"/>
</dbReference>
<dbReference type="ExpressionAtlas" id="Q6PGP7">
    <property type="expression patterns" value="baseline and differential"/>
</dbReference>
<dbReference type="GO" id="GO:0005737">
    <property type="term" value="C:cytoplasm"/>
    <property type="evidence" value="ECO:0000314"/>
    <property type="project" value="UniProtKB"/>
</dbReference>
<dbReference type="GO" id="GO:0005829">
    <property type="term" value="C:cytosol"/>
    <property type="evidence" value="ECO:0000314"/>
    <property type="project" value="HPA"/>
</dbReference>
<dbReference type="GO" id="GO:0000791">
    <property type="term" value="C:euchromatin"/>
    <property type="evidence" value="ECO:0000314"/>
    <property type="project" value="UniProtKB"/>
</dbReference>
<dbReference type="GO" id="GO:0005654">
    <property type="term" value="C:nucleoplasm"/>
    <property type="evidence" value="ECO:0000314"/>
    <property type="project" value="HPA"/>
</dbReference>
<dbReference type="GO" id="GO:0005634">
    <property type="term" value="C:nucleus"/>
    <property type="evidence" value="ECO:0000314"/>
    <property type="project" value="UniProtKB"/>
</dbReference>
<dbReference type="GO" id="GO:0055087">
    <property type="term" value="C:Ski complex"/>
    <property type="evidence" value="ECO:0000314"/>
    <property type="project" value="UniProtKB"/>
</dbReference>
<dbReference type="GO" id="GO:0000956">
    <property type="term" value="P:nuclear-transcribed mRNA catabolic process"/>
    <property type="evidence" value="ECO:0000318"/>
    <property type="project" value="GO_Central"/>
</dbReference>
<dbReference type="GO" id="GO:0070478">
    <property type="term" value="P:nuclear-transcribed mRNA catabolic process, 3'-5' exonucleolytic nonsense-mediated decay"/>
    <property type="evidence" value="ECO:0000314"/>
    <property type="project" value="UniProtKB"/>
</dbReference>
<dbReference type="GO" id="GO:0072344">
    <property type="term" value="P:rescue of stalled ribosome"/>
    <property type="evidence" value="ECO:0000314"/>
    <property type="project" value="UniProtKB"/>
</dbReference>
<dbReference type="FunFam" id="1.25.40.10:FF:000546">
    <property type="entry name" value="Tetratricopeptide repeat domain 37"/>
    <property type="match status" value="1"/>
</dbReference>
<dbReference type="FunFam" id="1.25.40.10:FF:000574">
    <property type="entry name" value="Tetratricopeptide repeat domain 37"/>
    <property type="match status" value="1"/>
</dbReference>
<dbReference type="FunFam" id="1.25.40.10:FF:000585">
    <property type="entry name" value="Tetratricopeptide repeat domain 37"/>
    <property type="match status" value="1"/>
</dbReference>
<dbReference type="FunFam" id="1.25.40.10:FF:000742">
    <property type="entry name" value="Tetratricopeptide repeat domain 37"/>
    <property type="match status" value="1"/>
</dbReference>
<dbReference type="Gene3D" id="1.25.40.10">
    <property type="entry name" value="Tetratricopeptide repeat domain"/>
    <property type="match status" value="8"/>
</dbReference>
<dbReference type="InterPro" id="IPR039226">
    <property type="entry name" value="Ski3/TTC37"/>
</dbReference>
<dbReference type="InterPro" id="IPR011990">
    <property type="entry name" value="TPR-like_helical_dom_sf"/>
</dbReference>
<dbReference type="InterPro" id="IPR019734">
    <property type="entry name" value="TPR_rpt"/>
</dbReference>
<dbReference type="PANTHER" id="PTHR15704">
    <property type="entry name" value="SUPERKILLER 3 PROTEIN-RELATED"/>
    <property type="match status" value="1"/>
</dbReference>
<dbReference type="PANTHER" id="PTHR15704:SF7">
    <property type="entry name" value="SUPERKILLER COMPLEX PROTEIN 3"/>
    <property type="match status" value="1"/>
</dbReference>
<dbReference type="Pfam" id="PF13432">
    <property type="entry name" value="TPR_16"/>
    <property type="match status" value="2"/>
</dbReference>
<dbReference type="Pfam" id="PF14559">
    <property type="entry name" value="TPR_19"/>
    <property type="match status" value="1"/>
</dbReference>
<dbReference type="Pfam" id="PF13181">
    <property type="entry name" value="TPR_8"/>
    <property type="match status" value="2"/>
</dbReference>
<dbReference type="SMART" id="SM00028">
    <property type="entry name" value="TPR"/>
    <property type="match status" value="14"/>
</dbReference>
<dbReference type="SUPFAM" id="SSF81901">
    <property type="entry name" value="HCP-like"/>
    <property type="match status" value="2"/>
</dbReference>
<dbReference type="SUPFAM" id="SSF48452">
    <property type="entry name" value="TPR-like"/>
    <property type="match status" value="5"/>
</dbReference>
<dbReference type="PROSITE" id="PS50005">
    <property type="entry name" value="TPR"/>
    <property type="match status" value="12"/>
</dbReference>
<dbReference type="PROSITE" id="PS50293">
    <property type="entry name" value="TPR_REGION"/>
    <property type="match status" value="5"/>
</dbReference>
<comment type="function">
    <text evidence="1 4 5">Component of the SKI complex, a multiprotein complex that assists the RNA-degrading exosome during the mRNA decay and quality-control pathways (PubMed:16024656, PubMed:32006463, PubMed:35120588). The SKI complex catalyzes mRNA extraction from 80S ribosomal complexes in the 3'-5' direction and channels mRNA to the cytosolic exosome for degradation (PubMed:32006463, PubMed:35120588). SKI-mediated extraction of mRNA from stalled ribosomes allow binding of the Pelota-HBS1L complex and subsequent ribosome disassembly by ABCE1 for ribosome recycling (PubMed:32006463). In the nucleus, the SKI complex associates with transcriptionally active genes in a manner dependent on PAF1 complex (PAF1C) (PubMed:16024656).</text>
</comment>
<comment type="subunit">
    <text evidence="1 4 5">Component of the SKI complex which consists of SKIC2, SKIC3 and SKIC8 (PubMed:16024656, PubMed:32006463, PubMed:35120588). Interacts with PAF1 (PubMed:16024656).</text>
</comment>
<comment type="interaction">
    <interactant intactId="EBI-6083436">
        <id>Q6PGP7</id>
    </interactant>
    <interactant intactId="EBI-2607770">
        <id>Q8N7H5</id>
        <label>PAF1</label>
    </interactant>
    <organismsDiffer>false</organismsDiffer>
    <experiments>2</experiments>
</comment>
<comment type="subcellular location">
    <subcellularLocation>
        <location evidence="1">Cytoplasm</location>
    </subcellularLocation>
    <subcellularLocation>
        <location evidence="1">Nucleus</location>
    </subcellularLocation>
</comment>
<comment type="tissue specificity">
    <text evidence="3">Widely expressed with the highest levels observed in vascular tissues, lymph node, pituitary, lung and intestine. Not expressed in the liver.</text>
</comment>
<comment type="disease" evidence="2">
    <disease id="DI-03421">
        <name>Trichohepatoenteric syndrome 1</name>
        <acronym>THES1</acronym>
        <description>A syndrome characterized by intrauterine growth retardation, severe diarrhea in infancy requiring total parenteral nutrition, facial dysmorphism, immunodeficiency, and hair abnormalities, mostly trichorrhexis nodosa. Hepatic involvement contributes to the poor prognosis of affected patients.</description>
        <dbReference type="MIM" id="222470"/>
    </disease>
    <text>The disease is caused by variants affecting the gene represented in this entry.</text>
</comment>
<comment type="similarity">
    <text evidence="10">Belongs to the SKI3 family.</text>
</comment>
<comment type="sequence caution" evidence="10">
    <conflict type="erroneous initiation">
        <sequence resource="EMBL-CDS" id="BAA20827"/>
    </conflict>
    <text>Extended N-terminus.</text>
</comment>
<accession>Q6PGP7</accession>
<accession>O15077</accession>
<accession>Q6PJI3</accession>